<proteinExistence type="evidence at protein level"/>
<feature type="chain" id="PRO_0000055031" description="Probable ATP-dependent RNA helicase DDX27">
    <location>
        <begin position="1"/>
        <end position="765"/>
    </location>
</feature>
<feature type="domain" description="Helicase ATP-binding" evidence="3">
    <location>
        <begin position="218"/>
        <end position="392"/>
    </location>
</feature>
<feature type="domain" description="Helicase C-terminal" evidence="4">
    <location>
        <begin position="426"/>
        <end position="572"/>
    </location>
</feature>
<feature type="region of interest" description="Disordered" evidence="5">
    <location>
        <begin position="43"/>
        <end position="83"/>
    </location>
</feature>
<feature type="region of interest" description="Disordered" evidence="5">
    <location>
        <begin position="111"/>
        <end position="179"/>
    </location>
</feature>
<feature type="short sequence motif" description="Required for interaction with the PEBOW complex" evidence="9">
    <location>
        <begin position="55"/>
        <end position="57"/>
    </location>
</feature>
<feature type="short sequence motif" description="Nuclear localization signal" evidence="2">
    <location>
        <begin position="164"/>
        <end position="169"/>
    </location>
</feature>
<feature type="short sequence motif" description="Q motif">
    <location>
        <begin position="187"/>
        <end position="215"/>
    </location>
</feature>
<feature type="short sequence motif" description="DEAD box">
    <location>
        <begin position="340"/>
        <end position="343"/>
    </location>
</feature>
<feature type="compositionally biased region" description="Acidic residues" evidence="5">
    <location>
        <begin position="43"/>
        <end position="63"/>
    </location>
</feature>
<feature type="compositionally biased region" description="Basic and acidic residues" evidence="5">
    <location>
        <begin position="129"/>
        <end position="156"/>
    </location>
</feature>
<feature type="compositionally biased region" description="Acidic residues" evidence="5">
    <location>
        <begin position="157"/>
        <end position="172"/>
    </location>
</feature>
<feature type="compositionally biased region" description="Basic residues" evidence="5">
    <location>
        <begin position="716"/>
        <end position="725"/>
    </location>
</feature>
<feature type="binding site" evidence="3">
    <location>
        <begin position="231"/>
        <end position="238"/>
    </location>
    <ligand>
        <name>ATP</name>
        <dbReference type="ChEBI" id="CHEBI:30616"/>
    </ligand>
</feature>
<feature type="modified residue" description="Phosphoserine" evidence="1">
    <location>
        <position position="23"/>
    </location>
</feature>
<feature type="modified residue" description="Phosphoserine" evidence="1">
    <location>
        <position position="25"/>
    </location>
</feature>
<feature type="modified residue" description="Phosphoserine" evidence="13 14 15">
    <location>
        <position position="48"/>
    </location>
</feature>
<feature type="modified residue" description="Phosphoserine" evidence="13">
    <location>
        <position position="135"/>
    </location>
</feature>
<feature type="modified residue" description="Phosphoserine" evidence="13">
    <location>
        <position position="146"/>
    </location>
</feature>
<feature type="sequence variant" id="VAR_022849" description="In dbSNP:rs1130146." evidence="6 7 10">
    <original>G</original>
    <variation>S</variation>
    <location>
        <position position="735"/>
    </location>
</feature>
<feature type="mutagenesis site" description="No interaction with PEBOW complex." evidence="9">
    <location>
        <begin position="55"/>
        <end position="57"/>
    </location>
</feature>
<feature type="sequence conflict" description="In Ref. 1; AAK21271." evidence="12" ref="1">
    <original>L</original>
    <variation>F</variation>
    <location>
        <position position="451"/>
    </location>
</feature>
<feature type="sequence conflict" description="In Ref. 5; BAA91284." evidence="12" ref="5">
    <original>N</original>
    <variation>S</variation>
    <location>
        <position position="511"/>
    </location>
</feature>
<feature type="sequence conflict" description="In Ref. 1; AAK95821 and 5; BAB14343." evidence="12" ref="1 5">
    <original>V</original>
    <variation>D</variation>
    <location>
        <position position="517"/>
    </location>
</feature>
<feature type="sequence conflict" description="In Ref. 1; AAK21271." evidence="12" ref="1">
    <original>A</original>
    <variation>T</variation>
    <location>
        <position position="643"/>
    </location>
</feature>
<protein>
    <recommendedName>
        <fullName>Probable ATP-dependent RNA helicase DDX27</fullName>
        <ecNumber>3.6.4.13</ecNumber>
    </recommendedName>
    <alternativeName>
        <fullName>DEAD box protein 27</fullName>
    </alternativeName>
</protein>
<keyword id="KW-0067">ATP-binding</keyword>
<keyword id="KW-0158">Chromosome</keyword>
<keyword id="KW-0347">Helicase</keyword>
<keyword id="KW-0378">Hydrolase</keyword>
<keyword id="KW-0547">Nucleotide-binding</keyword>
<keyword id="KW-0539">Nucleus</keyword>
<keyword id="KW-0597">Phosphoprotein</keyword>
<keyword id="KW-1267">Proteomics identification</keyword>
<keyword id="KW-1185">Reference proteome</keyword>
<keyword id="KW-0690">Ribosome biogenesis</keyword>
<keyword id="KW-0698">rRNA processing</keyword>
<evidence type="ECO:0000250" key="1">
    <source>
        <dbReference type="UniProtKB" id="Q921N6"/>
    </source>
</evidence>
<evidence type="ECO:0000255" key="2"/>
<evidence type="ECO:0000255" key="3">
    <source>
        <dbReference type="PROSITE-ProRule" id="PRU00541"/>
    </source>
</evidence>
<evidence type="ECO:0000255" key="4">
    <source>
        <dbReference type="PROSITE-ProRule" id="PRU00542"/>
    </source>
</evidence>
<evidence type="ECO:0000256" key="5">
    <source>
        <dbReference type="SAM" id="MobiDB-lite"/>
    </source>
</evidence>
<evidence type="ECO:0000269" key="6">
    <source>
    </source>
</evidence>
<evidence type="ECO:0000269" key="7">
    <source>
    </source>
</evidence>
<evidence type="ECO:0000269" key="8">
    <source>
    </source>
</evidence>
<evidence type="ECO:0000269" key="9">
    <source>
    </source>
</evidence>
<evidence type="ECO:0000269" key="10">
    <source ref="2"/>
</evidence>
<evidence type="ECO:0000303" key="11">
    <source>
    </source>
</evidence>
<evidence type="ECO:0000305" key="12"/>
<evidence type="ECO:0007744" key="13">
    <source>
    </source>
</evidence>
<evidence type="ECO:0007744" key="14">
    <source>
    </source>
</evidence>
<evidence type="ECO:0007744" key="15">
    <source>
    </source>
</evidence>
<accession>Q96GQ7</accession>
<accession>A0AVB6</accession>
<accession>B3GQE6</accession>
<accession>B7Z6D5</accession>
<accession>B7ZLY1</accession>
<accession>Q5VXM7</accession>
<accession>Q8WYG4</accession>
<accession>Q969N7</accession>
<accession>Q96F57</accession>
<accession>Q96L97</accession>
<accession>Q9BWY9</accession>
<accession>Q9BXF0</accession>
<accession>Q9H990</accession>
<accession>Q9NWU3</accession>
<accession>Q9P0C2</accession>
<accession>Q9UGD6</accession>
<sequence>MLADLGLIGTIGEDDEVPVEPESDSGDEEEEGPIVLGRRQKALGKNRSADFNPDFVFTEKEGTYDGSWALADVMSQLKKKRAATTLDEKIEKVRKKRKTEDKEAKSGKLEKEKEAKEGSEPKEQEDLQENDEEGSEDEASETDYSSADENILTKADTLKVKDRKKKKKKGQEAGGFFEDASQYDENLSFQDMNLSRPLLKAITAMGFKQPTPIQKACIPVGLLGKDICACAATGTGKTAAFALPVLERLIYKPRQAPVTRVLVLVPTRELGIQVHSVTRQLAQFCNITTCLAVGGLDVKSQEAALRAAPDILIATPGRLIDHLHNCPSFHLSSIEVLILDEADRMLDEYFEEQMKEIIRMCSHHRQTMLFSATMTDEVKDLASVSLKNPVRIFVNSNTDVAPFLRQEFIRIRPNREGDREAIVAALLTRTFTDHVMLFTQTKKQAHRMHILLGLMGLQVGELHGNLSQTQRLEALRRFKDEQIDILVATDVAARGLDIEGVKTVINFTMPNTIKHYVHRVGRTARAGRAGRSVSLVGEDERKMLKEIVKAAKAPVKARILPQDVILKFRDKIEKMEKDVYAVLQLEAEEKEMQQSEAQINTAKRLLEKGKEAVVQEPERSWFQTKEERKKEKIAKALQEFDLALRGKKKRKKFMKDAKKKGEMTAEERSQFEILKAQMFAERLAKRNRRAKRARAMPEEEPVRGPAKKQKQGKKSVFDEELTNTSKKALKQYRAGPSFEERKQLGLPHQRRGGNFKSKSRYKRRK</sequence>
<gene>
    <name type="primary">DDX27</name>
    <name evidence="11" type="synonym">cPERP-F</name>
    <name type="synonym">RHLP</name>
    <name type="ORF">HSPC259</name>
    <name type="ORF">PP3241</name>
</gene>
<name>DDX27_HUMAN</name>
<organism>
    <name type="scientific">Homo sapiens</name>
    <name type="common">Human</name>
    <dbReference type="NCBI Taxonomy" id="9606"/>
    <lineage>
        <taxon>Eukaryota</taxon>
        <taxon>Metazoa</taxon>
        <taxon>Chordata</taxon>
        <taxon>Craniata</taxon>
        <taxon>Vertebrata</taxon>
        <taxon>Euteleostomi</taxon>
        <taxon>Mammalia</taxon>
        <taxon>Eutheria</taxon>
        <taxon>Euarchontoglires</taxon>
        <taxon>Primates</taxon>
        <taxon>Haplorrhini</taxon>
        <taxon>Catarrhini</taxon>
        <taxon>Hominidae</taxon>
        <taxon>Homo</taxon>
    </lineage>
</organism>
<reference key="1">
    <citation type="submission" date="2001-07" db="EMBL/GenBank/DDBJ databases">
        <authorList>
            <person name="Wang Y."/>
            <person name="Fan Y.-Z."/>
            <person name="Han W.-L."/>
            <person name="Yang T."/>
            <person name="Gao Y."/>
            <person name="Ma D.-L."/>
        </authorList>
    </citation>
    <scope>NUCLEOTIDE SEQUENCE [MRNA]</scope>
</reference>
<reference key="2">
    <citation type="submission" date="2008-05" db="EMBL/GenBank/DDBJ databases">
        <title>DDX27 is upregulated in colorectal cancer.</title>
        <authorList>
            <person name="Mansilla F."/>
            <person name="Oerntoft T.F."/>
            <person name="Birkenkamp-Demtroeder K."/>
        </authorList>
    </citation>
    <scope>NUCLEOTIDE SEQUENCE [MRNA]</scope>
    <scope>VARIANT SER-735</scope>
    <source>
        <tissue>Colon cancer</tissue>
    </source>
</reference>
<reference key="3">
    <citation type="journal article" date="2001" name="Nature">
        <title>The DNA sequence and comparative analysis of human chromosome 20.</title>
        <authorList>
            <person name="Deloukas P."/>
            <person name="Matthews L.H."/>
            <person name="Ashurst J.L."/>
            <person name="Burton J."/>
            <person name="Gilbert J.G.R."/>
            <person name="Jones M."/>
            <person name="Stavrides G."/>
            <person name="Almeida J.P."/>
            <person name="Babbage A.K."/>
            <person name="Bagguley C.L."/>
            <person name="Bailey J."/>
            <person name="Barlow K.F."/>
            <person name="Bates K.N."/>
            <person name="Beard L.M."/>
            <person name="Beare D.M."/>
            <person name="Beasley O.P."/>
            <person name="Bird C.P."/>
            <person name="Blakey S.E."/>
            <person name="Bridgeman A.M."/>
            <person name="Brown A.J."/>
            <person name="Buck D."/>
            <person name="Burrill W.D."/>
            <person name="Butler A.P."/>
            <person name="Carder C."/>
            <person name="Carter N.P."/>
            <person name="Chapman J.C."/>
            <person name="Clamp M."/>
            <person name="Clark G."/>
            <person name="Clark L.N."/>
            <person name="Clark S.Y."/>
            <person name="Clee C.M."/>
            <person name="Clegg S."/>
            <person name="Cobley V.E."/>
            <person name="Collier R.E."/>
            <person name="Connor R.E."/>
            <person name="Corby N.R."/>
            <person name="Coulson A."/>
            <person name="Coville G.J."/>
            <person name="Deadman R."/>
            <person name="Dhami P.D."/>
            <person name="Dunn M."/>
            <person name="Ellington A.G."/>
            <person name="Frankland J.A."/>
            <person name="Fraser A."/>
            <person name="French L."/>
            <person name="Garner P."/>
            <person name="Grafham D.V."/>
            <person name="Griffiths C."/>
            <person name="Griffiths M.N.D."/>
            <person name="Gwilliam R."/>
            <person name="Hall R.E."/>
            <person name="Hammond S."/>
            <person name="Harley J.L."/>
            <person name="Heath P.D."/>
            <person name="Ho S."/>
            <person name="Holden J.L."/>
            <person name="Howden P.J."/>
            <person name="Huckle E."/>
            <person name="Hunt A.R."/>
            <person name="Hunt S.E."/>
            <person name="Jekosch K."/>
            <person name="Johnson C.M."/>
            <person name="Johnson D."/>
            <person name="Kay M.P."/>
            <person name="Kimberley A.M."/>
            <person name="King A."/>
            <person name="Knights A."/>
            <person name="Laird G.K."/>
            <person name="Lawlor S."/>
            <person name="Lehvaeslaiho M.H."/>
            <person name="Leversha M.A."/>
            <person name="Lloyd C."/>
            <person name="Lloyd D.M."/>
            <person name="Lovell J.D."/>
            <person name="Marsh V.L."/>
            <person name="Martin S.L."/>
            <person name="McConnachie L.J."/>
            <person name="McLay K."/>
            <person name="McMurray A.A."/>
            <person name="Milne S.A."/>
            <person name="Mistry D."/>
            <person name="Moore M.J.F."/>
            <person name="Mullikin J.C."/>
            <person name="Nickerson T."/>
            <person name="Oliver K."/>
            <person name="Parker A."/>
            <person name="Patel R."/>
            <person name="Pearce T.A.V."/>
            <person name="Peck A.I."/>
            <person name="Phillimore B.J.C.T."/>
            <person name="Prathalingam S.R."/>
            <person name="Plumb R.W."/>
            <person name="Ramsay H."/>
            <person name="Rice C.M."/>
            <person name="Ross M.T."/>
            <person name="Scott C.E."/>
            <person name="Sehra H.K."/>
            <person name="Shownkeen R."/>
            <person name="Sims S."/>
            <person name="Skuce C.D."/>
            <person name="Smith M.L."/>
            <person name="Soderlund C."/>
            <person name="Steward C.A."/>
            <person name="Sulston J.E."/>
            <person name="Swann R.M."/>
            <person name="Sycamore N."/>
            <person name="Taylor R."/>
            <person name="Tee L."/>
            <person name="Thomas D.W."/>
            <person name="Thorpe A."/>
            <person name="Tracey A."/>
            <person name="Tromans A.C."/>
            <person name="Vaudin M."/>
            <person name="Wall M."/>
            <person name="Wallis J.M."/>
            <person name="Whitehead S.L."/>
            <person name="Whittaker P."/>
            <person name="Willey D.L."/>
            <person name="Williams L."/>
            <person name="Williams S.A."/>
            <person name="Wilming L."/>
            <person name="Wray P.W."/>
            <person name="Hubbard T."/>
            <person name="Durbin R.M."/>
            <person name="Bentley D.R."/>
            <person name="Beck S."/>
            <person name="Rogers J."/>
        </authorList>
    </citation>
    <scope>NUCLEOTIDE SEQUENCE [LARGE SCALE GENOMIC DNA]</scope>
</reference>
<reference key="4">
    <citation type="journal article" date="2004" name="Genome Res.">
        <title>The status, quality, and expansion of the NIH full-length cDNA project: the Mammalian Gene Collection (MGC).</title>
        <authorList>
            <consortium name="The MGC Project Team"/>
        </authorList>
    </citation>
    <scope>NUCLEOTIDE SEQUENCE [LARGE SCALE MRNA]</scope>
    <scope>VARIANT SER-735</scope>
    <source>
        <tissue>Brain</tissue>
        <tissue>Muscle</tissue>
        <tissue>Skin</tissue>
    </source>
</reference>
<reference key="5">
    <citation type="journal article" date="2004" name="Nat. Genet.">
        <title>Complete sequencing and characterization of 21,243 full-length human cDNAs.</title>
        <authorList>
            <person name="Ota T."/>
            <person name="Suzuki Y."/>
            <person name="Nishikawa T."/>
            <person name="Otsuki T."/>
            <person name="Sugiyama T."/>
            <person name="Irie R."/>
            <person name="Wakamatsu A."/>
            <person name="Hayashi K."/>
            <person name="Sato H."/>
            <person name="Nagai K."/>
            <person name="Kimura K."/>
            <person name="Makita H."/>
            <person name="Sekine M."/>
            <person name="Obayashi M."/>
            <person name="Nishi T."/>
            <person name="Shibahara T."/>
            <person name="Tanaka T."/>
            <person name="Ishii S."/>
            <person name="Yamamoto J."/>
            <person name="Saito K."/>
            <person name="Kawai Y."/>
            <person name="Isono Y."/>
            <person name="Nakamura Y."/>
            <person name="Nagahari K."/>
            <person name="Murakami K."/>
            <person name="Yasuda T."/>
            <person name="Iwayanagi T."/>
            <person name="Wagatsuma M."/>
            <person name="Shiratori A."/>
            <person name="Sudo H."/>
            <person name="Hosoiri T."/>
            <person name="Kaku Y."/>
            <person name="Kodaira H."/>
            <person name="Kondo H."/>
            <person name="Sugawara M."/>
            <person name="Takahashi M."/>
            <person name="Kanda K."/>
            <person name="Yokoi T."/>
            <person name="Furuya T."/>
            <person name="Kikkawa E."/>
            <person name="Omura Y."/>
            <person name="Abe K."/>
            <person name="Kamihara K."/>
            <person name="Katsuta N."/>
            <person name="Sato K."/>
            <person name="Tanikawa M."/>
            <person name="Yamazaki M."/>
            <person name="Ninomiya K."/>
            <person name="Ishibashi T."/>
            <person name="Yamashita H."/>
            <person name="Murakawa K."/>
            <person name="Fujimori K."/>
            <person name="Tanai H."/>
            <person name="Kimata M."/>
            <person name="Watanabe M."/>
            <person name="Hiraoka S."/>
            <person name="Chiba Y."/>
            <person name="Ishida S."/>
            <person name="Ono Y."/>
            <person name="Takiguchi S."/>
            <person name="Watanabe S."/>
            <person name="Yosida M."/>
            <person name="Hotuta T."/>
            <person name="Kusano J."/>
            <person name="Kanehori K."/>
            <person name="Takahashi-Fujii A."/>
            <person name="Hara H."/>
            <person name="Tanase T.-O."/>
            <person name="Nomura Y."/>
            <person name="Togiya S."/>
            <person name="Komai F."/>
            <person name="Hara R."/>
            <person name="Takeuchi K."/>
            <person name="Arita M."/>
            <person name="Imose N."/>
            <person name="Musashino K."/>
            <person name="Yuuki H."/>
            <person name="Oshima A."/>
            <person name="Sasaki N."/>
            <person name="Aotsuka S."/>
            <person name="Yoshikawa Y."/>
            <person name="Matsunawa H."/>
            <person name="Ichihara T."/>
            <person name="Shiohata N."/>
            <person name="Sano S."/>
            <person name="Moriya S."/>
            <person name="Momiyama H."/>
            <person name="Satoh N."/>
            <person name="Takami S."/>
            <person name="Terashima Y."/>
            <person name="Suzuki O."/>
            <person name="Nakagawa S."/>
            <person name="Senoh A."/>
            <person name="Mizoguchi H."/>
            <person name="Goto Y."/>
            <person name="Shimizu F."/>
            <person name="Wakebe H."/>
            <person name="Hishigaki H."/>
            <person name="Watanabe T."/>
            <person name="Sugiyama A."/>
            <person name="Takemoto M."/>
            <person name="Kawakami B."/>
            <person name="Yamazaki M."/>
            <person name="Watanabe K."/>
            <person name="Kumagai A."/>
            <person name="Itakura S."/>
            <person name="Fukuzumi Y."/>
            <person name="Fujimori Y."/>
            <person name="Komiyama M."/>
            <person name="Tashiro H."/>
            <person name="Tanigami A."/>
            <person name="Fujiwara T."/>
            <person name="Ono T."/>
            <person name="Yamada K."/>
            <person name="Fujii Y."/>
            <person name="Ozaki K."/>
            <person name="Hirao M."/>
            <person name="Ohmori Y."/>
            <person name="Kawabata A."/>
            <person name="Hikiji T."/>
            <person name="Kobatake N."/>
            <person name="Inagaki H."/>
            <person name="Ikema Y."/>
            <person name="Okamoto S."/>
            <person name="Okitani R."/>
            <person name="Kawakami T."/>
            <person name="Noguchi S."/>
            <person name="Itoh T."/>
            <person name="Shigeta K."/>
            <person name="Senba T."/>
            <person name="Matsumura K."/>
            <person name="Nakajima Y."/>
            <person name="Mizuno T."/>
            <person name="Morinaga M."/>
            <person name="Sasaki M."/>
            <person name="Togashi T."/>
            <person name="Oyama M."/>
            <person name="Hata H."/>
            <person name="Watanabe M."/>
            <person name="Komatsu T."/>
            <person name="Mizushima-Sugano J."/>
            <person name="Satoh T."/>
            <person name="Shirai Y."/>
            <person name="Takahashi Y."/>
            <person name="Nakagawa K."/>
            <person name="Okumura K."/>
            <person name="Nagase T."/>
            <person name="Nomura N."/>
            <person name="Kikuchi H."/>
            <person name="Masuho Y."/>
            <person name="Yamashita R."/>
            <person name="Nakai K."/>
            <person name="Yada T."/>
            <person name="Nakamura Y."/>
            <person name="Ohara O."/>
            <person name="Isogai T."/>
            <person name="Sugano S."/>
        </authorList>
    </citation>
    <scope>NUCLEOTIDE SEQUENCE [LARGE SCALE MRNA]</scope>
    <scope>VARIANT SER-735</scope>
    <source>
        <tissue>Stomach cancer</tissue>
        <tissue>Teratocarcinoma</tissue>
    </source>
</reference>
<reference key="6">
    <citation type="journal article" date="2004" name="Proc. Natl. Acad. Sci. U.S.A.">
        <title>Large-scale cDNA transfection screening for genes related to cancer development and progression.</title>
        <authorList>
            <person name="Wan D."/>
            <person name="Gong Y."/>
            <person name="Qin W."/>
            <person name="Zhang P."/>
            <person name="Li J."/>
            <person name="Wei L."/>
            <person name="Zhou X."/>
            <person name="Li H."/>
            <person name="Qiu X."/>
            <person name="Zhong F."/>
            <person name="He L."/>
            <person name="Yu J."/>
            <person name="Yao G."/>
            <person name="Jiang H."/>
            <person name="Qian L."/>
            <person name="Yu Y."/>
            <person name="Shu H."/>
            <person name="Chen X."/>
            <person name="Xu H."/>
            <person name="Guo M."/>
            <person name="Pan Z."/>
            <person name="Chen Y."/>
            <person name="Ge C."/>
            <person name="Yang S."/>
            <person name="Gu J."/>
        </authorList>
    </citation>
    <scope>NUCLEOTIDE SEQUENCE [LARGE SCALE MRNA] OF 98-657</scope>
</reference>
<reference key="7">
    <citation type="submission" date="1999-05" db="EMBL/GenBank/DDBJ databases">
        <title>Human partial CDS from CD34+ stem cells.</title>
        <authorList>
            <person name="Ye M."/>
            <person name="Zhang Q.-H."/>
            <person name="Zhou J."/>
            <person name="Shen Y."/>
            <person name="Wu X.-Y."/>
            <person name="Guan Z.Q."/>
            <person name="Wang L."/>
            <person name="Fan H.-Y."/>
            <person name="Mao Y.-F."/>
            <person name="Dai M."/>
            <person name="Huang Q.-H."/>
            <person name="Chen S.-J."/>
            <person name="Chen Z."/>
        </authorList>
    </citation>
    <scope>NUCLEOTIDE SEQUENCE [LARGE SCALE MRNA] OF 569-765</scope>
    <source>
        <tissue>Umbilical cord blood</tissue>
    </source>
</reference>
<reference key="8">
    <citation type="journal article" date="2008" name="Proc. Natl. Acad. Sci. U.S.A.">
        <title>A quantitative atlas of mitotic phosphorylation.</title>
        <authorList>
            <person name="Dephoure N."/>
            <person name="Zhou C."/>
            <person name="Villen J."/>
            <person name="Beausoleil S.A."/>
            <person name="Bakalarski C.E."/>
            <person name="Elledge S.J."/>
            <person name="Gygi S.P."/>
        </authorList>
    </citation>
    <scope>PHOSPHORYLATION [LARGE SCALE ANALYSIS] AT SER-48; SER-135 AND SER-146</scope>
    <scope>IDENTIFICATION BY MASS SPECTROMETRY [LARGE SCALE ANALYSIS]</scope>
    <source>
        <tissue>Cervix carcinoma</tissue>
    </source>
</reference>
<reference key="9">
    <citation type="journal article" date="2010" name="Cell">
        <title>The protein composition of mitotic chromosomes determined using multiclassifier combinatorial proteomics.</title>
        <authorList>
            <person name="Ohta S."/>
            <person name="Bukowski-Wills J.C."/>
            <person name="Sanchez-Pulido L."/>
            <person name="Alves Fde L."/>
            <person name="Wood L."/>
            <person name="Chen Z.A."/>
            <person name="Platani M."/>
            <person name="Fischer L."/>
            <person name="Hudson D.F."/>
            <person name="Ponting C.P."/>
            <person name="Fukagawa T."/>
            <person name="Earnshaw W.C."/>
            <person name="Rappsilber J."/>
        </authorList>
    </citation>
    <scope>SUBCELLULAR LOCATION</scope>
</reference>
<reference key="10">
    <citation type="journal article" date="2010" name="Sci. Signal.">
        <title>Quantitative phosphoproteomics reveals widespread full phosphorylation site occupancy during mitosis.</title>
        <authorList>
            <person name="Olsen J.V."/>
            <person name="Vermeulen M."/>
            <person name="Santamaria A."/>
            <person name="Kumar C."/>
            <person name="Miller M.L."/>
            <person name="Jensen L.J."/>
            <person name="Gnad F."/>
            <person name="Cox J."/>
            <person name="Jensen T.S."/>
            <person name="Nigg E.A."/>
            <person name="Brunak S."/>
            <person name="Mann M."/>
        </authorList>
    </citation>
    <scope>PHOSPHORYLATION [LARGE SCALE ANALYSIS] AT SER-48</scope>
    <scope>IDENTIFICATION BY MASS SPECTROMETRY [LARGE SCALE ANALYSIS]</scope>
    <source>
        <tissue>Cervix carcinoma</tissue>
    </source>
</reference>
<reference key="11">
    <citation type="journal article" date="2011" name="BMC Syst. Biol.">
        <title>Initial characterization of the human central proteome.</title>
        <authorList>
            <person name="Burkard T.R."/>
            <person name="Planyavsky M."/>
            <person name="Kaupe I."/>
            <person name="Breitwieser F.P."/>
            <person name="Buerckstuemmer T."/>
            <person name="Bennett K.L."/>
            <person name="Superti-Furga G."/>
            <person name="Colinge J."/>
        </authorList>
    </citation>
    <scope>IDENTIFICATION BY MASS SPECTROMETRY [LARGE SCALE ANALYSIS]</scope>
</reference>
<reference key="12">
    <citation type="journal article" date="2013" name="J. Proteome Res.">
        <title>Toward a comprehensive characterization of a human cancer cell phosphoproteome.</title>
        <authorList>
            <person name="Zhou H."/>
            <person name="Di Palma S."/>
            <person name="Preisinger C."/>
            <person name="Peng M."/>
            <person name="Polat A.N."/>
            <person name="Heck A.J."/>
            <person name="Mohammed S."/>
        </authorList>
    </citation>
    <scope>PHOSPHORYLATION [LARGE SCALE ANALYSIS] AT SER-48</scope>
    <scope>IDENTIFICATION BY MASS SPECTROMETRY [LARGE SCALE ANALYSIS]</scope>
    <source>
        <tissue>Cervix carcinoma</tissue>
        <tissue>Erythroleukemia</tissue>
    </source>
</reference>
<reference key="13">
    <citation type="journal article" date="2014" name="J. Proteomics">
        <title>An enzyme assisted RP-RPLC approach for in-depth analysis of human liver phosphoproteome.</title>
        <authorList>
            <person name="Bian Y."/>
            <person name="Song C."/>
            <person name="Cheng K."/>
            <person name="Dong M."/>
            <person name="Wang F."/>
            <person name="Huang J."/>
            <person name="Sun D."/>
            <person name="Wang L."/>
            <person name="Ye M."/>
            <person name="Zou H."/>
        </authorList>
    </citation>
    <scope>IDENTIFICATION BY MASS SPECTROMETRY [LARGE SCALE ANALYSIS]</scope>
    <source>
        <tissue>Liver</tissue>
    </source>
</reference>
<reference key="14">
    <citation type="journal article" date="2015" name="Exp. Cell Res.">
        <title>DEAD-box helicase DDX27 regulates 3' end formation of ribosomal 47S RNA and stably associates with the PeBoW-complex.</title>
        <authorList>
            <person name="Kellner M."/>
            <person name="Rohrmoser M."/>
            <person name="Forne I."/>
            <person name="Voss K."/>
            <person name="Burger K."/>
            <person name="Muehl B."/>
            <person name="Gruber-Eber A."/>
            <person name="Kremmer E."/>
            <person name="Imhof A."/>
            <person name="Eick D."/>
        </authorList>
    </citation>
    <scope>SUBCELLULAR LOCATION</scope>
    <scope>IDENTIFICATION BY MASS SPECTROMETRY</scope>
    <scope>INTERACTION WITH BOP1 AND PES1</scope>
    <scope>FUNCTION</scope>
    <scope>MUTAGENESIS OF 55-PHE--PHE-57</scope>
</reference>
<comment type="function">
    <text evidence="9">Probable ATP-dependent RNA helicase. Component of the nucleolar ribosomal RNA (rRNA) processing machinery that regulates 3' end formation of ribosomal 47S rRNA (PubMed:25825154).</text>
</comment>
<comment type="catalytic activity">
    <reaction>
        <text>ATP + H2O = ADP + phosphate + H(+)</text>
        <dbReference type="Rhea" id="RHEA:13065"/>
        <dbReference type="ChEBI" id="CHEBI:15377"/>
        <dbReference type="ChEBI" id="CHEBI:15378"/>
        <dbReference type="ChEBI" id="CHEBI:30616"/>
        <dbReference type="ChEBI" id="CHEBI:43474"/>
        <dbReference type="ChEBI" id="CHEBI:456216"/>
        <dbReference type="EC" id="3.6.4.13"/>
    </reaction>
</comment>
<comment type="subunit">
    <text evidence="9">Associates with PeBoW complex, composed of BOP1, PES1 and WDR12 (PubMed:25825154). Interacts directly with BOP1 and PES1 (PubMed:25825154).</text>
</comment>
<comment type="subcellular location">
    <subcellularLocation>
        <location evidence="9">Nucleus</location>
        <location evidence="9">Nucleolus</location>
    </subcellularLocation>
    <subcellularLocation>
        <location evidence="8">Chromosome</location>
    </subcellularLocation>
    <text evidence="9">Associates with 60S and 90S pre-ribosomal particles (PubMed:25825154).</text>
</comment>
<comment type="domain">
    <text evidence="9">The C-terminal domain regulates nucleolar localization (PubMed:25825154).</text>
</comment>
<comment type="similarity">
    <text evidence="12">Belongs to the DEAD box helicase family. DDX27/DRS1 subfamily.</text>
</comment>
<comment type="sequence caution" evidence="12">
    <conflict type="miscellaneous discrepancy">
        <sequence resource="EMBL-CDS" id="AAF28937"/>
    </conflict>
    <text>Sequencing errors.</text>
</comment>
<comment type="sequence caution" evidence="12">
    <conflict type="frameshift">
        <sequence resource="EMBL-CDS" id="AAG22482"/>
    </conflict>
</comment>
<comment type="sequence caution" evidence="12">
    <conflict type="erroneous initiation">
        <sequence resource="EMBL-CDS" id="AAH09304"/>
    </conflict>
    <text>Extended N-terminus.</text>
</comment>
<comment type="sequence caution" evidence="12">
    <conflict type="erroneous initiation">
        <sequence resource="EMBL-CDS" id="AAH11927"/>
    </conflict>
    <text>Extended N-terminus.</text>
</comment>
<comment type="sequence caution" evidence="12">
    <conflict type="erroneous initiation">
        <sequence resource="EMBL-CDS" id="AAH16060"/>
    </conflict>
    <text>Extended N-terminus.</text>
</comment>
<comment type="sequence caution" evidence="12">
    <conflict type="erroneous initiation">
        <sequence resource="EMBL-CDS" id="AAI26288"/>
    </conflict>
    <text>Extended N-terminus.</text>
</comment>
<comment type="sequence caution" evidence="12">
    <conflict type="erroneous initiation">
        <sequence resource="EMBL-CDS" id="AAI30276"/>
    </conflict>
    <text>Extended N-terminus.</text>
</comment>
<comment type="sequence caution" evidence="12">
    <conflict type="erroneous initiation">
        <sequence resource="EMBL-CDS" id="AAI44126"/>
    </conflict>
    <text>Extended N-terminus.</text>
</comment>
<comment type="sequence caution" evidence="12">
    <conflict type="erroneous initiation">
        <sequence resource="EMBL-CDS" id="AAK95821"/>
    </conflict>
    <text>Extended N-terminus.</text>
</comment>
<comment type="sequence caution" evidence="12">
    <conflict type="erroneous initiation">
        <sequence resource="EMBL-CDS" id="BAA91284"/>
    </conflict>
    <text>Truncated N-terminus.</text>
</comment>
<dbReference type="EC" id="3.6.4.13"/>
<dbReference type="EMBL" id="AY044431">
    <property type="protein sequence ID" value="AAK95821.1"/>
    <property type="status" value="ALT_INIT"/>
    <property type="molecule type" value="mRNA"/>
</dbReference>
<dbReference type="EMBL" id="AF336851">
    <property type="protein sequence ID" value="AAK21271.1"/>
    <property type="molecule type" value="mRNA"/>
</dbReference>
<dbReference type="EMBL" id="EU718675">
    <property type="protein sequence ID" value="ACD91989.1"/>
    <property type="molecule type" value="mRNA"/>
</dbReference>
<dbReference type="EMBL" id="AL049766">
    <property type="status" value="NOT_ANNOTATED_CDS"/>
    <property type="molecule type" value="Genomic_DNA"/>
</dbReference>
<dbReference type="EMBL" id="AL357560">
    <property type="status" value="NOT_ANNOTATED_CDS"/>
    <property type="molecule type" value="Genomic_DNA"/>
</dbReference>
<dbReference type="EMBL" id="BC009304">
    <property type="protein sequence ID" value="AAH09304.2"/>
    <property type="status" value="ALT_INIT"/>
    <property type="molecule type" value="mRNA"/>
</dbReference>
<dbReference type="EMBL" id="BC011927">
    <property type="protein sequence ID" value="AAH11927.2"/>
    <property type="status" value="ALT_INIT"/>
    <property type="molecule type" value="mRNA"/>
</dbReference>
<dbReference type="EMBL" id="BC016060">
    <property type="protein sequence ID" value="AAH16060.2"/>
    <property type="status" value="ALT_INIT"/>
    <property type="molecule type" value="mRNA"/>
</dbReference>
<dbReference type="EMBL" id="BC126287">
    <property type="protein sequence ID" value="AAI26288.1"/>
    <property type="status" value="ALT_INIT"/>
    <property type="molecule type" value="mRNA"/>
</dbReference>
<dbReference type="EMBL" id="BC130275">
    <property type="protein sequence ID" value="AAI30276.1"/>
    <property type="status" value="ALT_INIT"/>
    <property type="molecule type" value="mRNA"/>
</dbReference>
<dbReference type="EMBL" id="BC144125">
    <property type="protein sequence ID" value="AAI44126.1"/>
    <property type="status" value="ALT_INIT"/>
    <property type="molecule type" value="mRNA"/>
</dbReference>
<dbReference type="EMBL" id="AK022979">
    <property type="protein sequence ID" value="BAB14343.1"/>
    <property type="molecule type" value="mRNA"/>
</dbReference>
<dbReference type="EMBL" id="AK000603">
    <property type="protein sequence ID" value="BAA91284.1"/>
    <property type="status" value="ALT_INIT"/>
    <property type="molecule type" value="mRNA"/>
</dbReference>
<dbReference type="EMBL" id="AK300135">
    <property type="protein sequence ID" value="BAH13221.1"/>
    <property type="molecule type" value="mRNA"/>
</dbReference>
<dbReference type="EMBL" id="AF193054">
    <property type="protein sequence ID" value="AAG22482.1"/>
    <property type="status" value="ALT_FRAME"/>
    <property type="molecule type" value="mRNA"/>
</dbReference>
<dbReference type="EMBL" id="AF161377">
    <property type="protein sequence ID" value="AAF28937.1"/>
    <property type="status" value="ALT_SEQ"/>
    <property type="molecule type" value="mRNA"/>
</dbReference>
<dbReference type="RefSeq" id="NP_060365.7">
    <property type="nucleotide sequence ID" value="NM_017895.7"/>
</dbReference>
<dbReference type="SMR" id="Q96GQ7"/>
<dbReference type="BioGRID" id="120793">
    <property type="interactions" value="340"/>
</dbReference>
<dbReference type="CORUM" id="Q96GQ7"/>
<dbReference type="FunCoup" id="Q96GQ7">
    <property type="interactions" value="2535"/>
</dbReference>
<dbReference type="IntAct" id="Q96GQ7">
    <property type="interactions" value="186"/>
</dbReference>
<dbReference type="MINT" id="Q96GQ7"/>
<dbReference type="STRING" id="9606.ENSP00000483495"/>
<dbReference type="GlyGen" id="Q96GQ7">
    <property type="glycosylation" value="2 sites, 1 O-linked glycan (2 sites)"/>
</dbReference>
<dbReference type="iPTMnet" id="Q96GQ7"/>
<dbReference type="PhosphoSitePlus" id="Q96GQ7"/>
<dbReference type="SwissPalm" id="Q96GQ7"/>
<dbReference type="BioMuta" id="DDX27"/>
<dbReference type="DMDM" id="29427946"/>
<dbReference type="jPOST" id="Q96GQ7"/>
<dbReference type="MassIVE" id="Q96GQ7"/>
<dbReference type="PaxDb" id="9606-ENSP00000483495"/>
<dbReference type="PeptideAtlas" id="Q96GQ7"/>
<dbReference type="ProteomicsDB" id="76655"/>
<dbReference type="Pumba" id="Q96GQ7"/>
<dbReference type="Antibodypedia" id="13624">
    <property type="antibodies" value="169 antibodies from 24 providers"/>
</dbReference>
<dbReference type="DNASU" id="55661"/>
<dbReference type="GeneID" id="55661"/>
<dbReference type="KEGG" id="hsa:55661"/>
<dbReference type="MANE-Select" id="ENST00000618172.5">
    <property type="protein sequence ID" value="ENSP00000482680.1"/>
    <property type="RefSeq nucleotide sequence ID" value="NM_017895.8"/>
    <property type="RefSeq protein sequence ID" value="NP_060365.8"/>
</dbReference>
<dbReference type="UCSC" id="uc002xuh.4">
    <property type="organism name" value="human"/>
</dbReference>
<dbReference type="AGR" id="HGNC:15837"/>
<dbReference type="CTD" id="55661"/>
<dbReference type="DisGeNET" id="55661"/>
<dbReference type="GeneCards" id="DDX27"/>
<dbReference type="HGNC" id="HGNC:15837">
    <property type="gene designation" value="DDX27"/>
</dbReference>
<dbReference type="MIM" id="616621">
    <property type="type" value="gene"/>
</dbReference>
<dbReference type="neXtProt" id="NX_Q96GQ7"/>
<dbReference type="PharmGKB" id="PA27213"/>
<dbReference type="VEuPathDB" id="HostDB:ENSG00000124228"/>
<dbReference type="eggNOG" id="KOG0338">
    <property type="taxonomic scope" value="Eukaryota"/>
</dbReference>
<dbReference type="GeneTree" id="ENSGT00550000074997"/>
<dbReference type="HOGENOM" id="CLU_003041_3_3_1"/>
<dbReference type="InParanoid" id="Q96GQ7"/>
<dbReference type="OrthoDB" id="10259843at2759"/>
<dbReference type="PAN-GO" id="Q96GQ7">
    <property type="GO annotations" value="1 GO annotation based on evolutionary models"/>
</dbReference>
<dbReference type="PhylomeDB" id="Q96GQ7"/>
<dbReference type="TreeFam" id="TF314780"/>
<dbReference type="PathwayCommons" id="Q96GQ7"/>
<dbReference type="SignaLink" id="Q96GQ7"/>
<dbReference type="BioGRID-ORCS" id="55661">
    <property type="hits" value="699 hits in 1170 CRISPR screens"/>
</dbReference>
<dbReference type="CD-CODE" id="232F8A39">
    <property type="entry name" value="P-body"/>
</dbReference>
<dbReference type="CD-CODE" id="91857CE7">
    <property type="entry name" value="Nucleolus"/>
</dbReference>
<dbReference type="ChiTaRS" id="DDX27">
    <property type="organism name" value="human"/>
</dbReference>
<dbReference type="GeneWiki" id="DDX27"/>
<dbReference type="GenomeRNAi" id="55661"/>
<dbReference type="Pharos" id="Q96GQ7">
    <property type="development level" value="Tbio"/>
</dbReference>
<dbReference type="PRO" id="PR:Q96GQ7"/>
<dbReference type="Proteomes" id="UP000005640">
    <property type="component" value="Chromosome 20"/>
</dbReference>
<dbReference type="RNAct" id="Q96GQ7">
    <property type="molecule type" value="protein"/>
</dbReference>
<dbReference type="Bgee" id="ENSG00000124228">
    <property type="expression patterns" value="Expressed in tendon of biceps brachii and 210 other cell types or tissues"/>
</dbReference>
<dbReference type="ExpressionAtlas" id="B7Z6D5">
    <property type="expression patterns" value="baseline and differential"/>
</dbReference>
<dbReference type="GO" id="GO:0005694">
    <property type="term" value="C:chromosome"/>
    <property type="evidence" value="ECO:0000314"/>
    <property type="project" value="UniProtKB"/>
</dbReference>
<dbReference type="GO" id="GO:0005730">
    <property type="term" value="C:nucleolus"/>
    <property type="evidence" value="ECO:0000314"/>
    <property type="project" value="UniProtKB"/>
</dbReference>
<dbReference type="GO" id="GO:0005524">
    <property type="term" value="F:ATP binding"/>
    <property type="evidence" value="ECO:0007669"/>
    <property type="project" value="UniProtKB-KW"/>
</dbReference>
<dbReference type="GO" id="GO:0016887">
    <property type="term" value="F:ATP hydrolysis activity"/>
    <property type="evidence" value="ECO:0007669"/>
    <property type="project" value="RHEA"/>
</dbReference>
<dbReference type="GO" id="GO:0003723">
    <property type="term" value="F:RNA binding"/>
    <property type="evidence" value="ECO:0007005"/>
    <property type="project" value="UniProtKB"/>
</dbReference>
<dbReference type="GO" id="GO:0003724">
    <property type="term" value="F:RNA helicase activity"/>
    <property type="evidence" value="ECO:0007669"/>
    <property type="project" value="UniProtKB-EC"/>
</dbReference>
<dbReference type="GO" id="GO:0006364">
    <property type="term" value="P:rRNA processing"/>
    <property type="evidence" value="ECO:0000315"/>
    <property type="project" value="UniProtKB"/>
</dbReference>
<dbReference type="CDD" id="cd17947">
    <property type="entry name" value="DEADc_DDX27"/>
    <property type="match status" value="1"/>
</dbReference>
<dbReference type="CDD" id="cd18787">
    <property type="entry name" value="SF2_C_DEAD"/>
    <property type="match status" value="1"/>
</dbReference>
<dbReference type="FunFam" id="3.40.50.300:FF:000842">
    <property type="entry name" value="ATP-dependent RNA helicase DRS1"/>
    <property type="match status" value="1"/>
</dbReference>
<dbReference type="FunFam" id="3.40.50.300:FF:001134">
    <property type="entry name" value="Probable ATP-dependent RNA helicase DDX27"/>
    <property type="match status" value="1"/>
</dbReference>
<dbReference type="Gene3D" id="3.40.50.300">
    <property type="entry name" value="P-loop containing nucleotide triphosphate hydrolases"/>
    <property type="match status" value="2"/>
</dbReference>
<dbReference type="InterPro" id="IPR011545">
    <property type="entry name" value="DEAD/DEAH_box_helicase_dom"/>
</dbReference>
<dbReference type="InterPro" id="IPR050079">
    <property type="entry name" value="DEAD_box_RNA_helicase"/>
</dbReference>
<dbReference type="InterPro" id="IPR014001">
    <property type="entry name" value="Helicase_ATP-bd"/>
</dbReference>
<dbReference type="InterPro" id="IPR001650">
    <property type="entry name" value="Helicase_C-like"/>
</dbReference>
<dbReference type="InterPro" id="IPR027417">
    <property type="entry name" value="P-loop_NTPase"/>
</dbReference>
<dbReference type="InterPro" id="IPR000629">
    <property type="entry name" value="RNA-helicase_DEAD-box_CS"/>
</dbReference>
<dbReference type="InterPro" id="IPR014014">
    <property type="entry name" value="RNA_helicase_DEAD_Q_motif"/>
</dbReference>
<dbReference type="PANTHER" id="PTHR47959">
    <property type="entry name" value="ATP-DEPENDENT RNA HELICASE RHLE-RELATED"/>
    <property type="match status" value="1"/>
</dbReference>
<dbReference type="PANTHER" id="PTHR47959:SF22">
    <property type="entry name" value="RNA HELICASE"/>
    <property type="match status" value="1"/>
</dbReference>
<dbReference type="Pfam" id="PF00270">
    <property type="entry name" value="DEAD"/>
    <property type="match status" value="1"/>
</dbReference>
<dbReference type="Pfam" id="PF00271">
    <property type="entry name" value="Helicase_C"/>
    <property type="match status" value="1"/>
</dbReference>
<dbReference type="SMART" id="SM00487">
    <property type="entry name" value="DEXDc"/>
    <property type="match status" value="1"/>
</dbReference>
<dbReference type="SMART" id="SM00490">
    <property type="entry name" value="HELICc"/>
    <property type="match status" value="1"/>
</dbReference>
<dbReference type="SUPFAM" id="SSF52540">
    <property type="entry name" value="P-loop containing nucleoside triphosphate hydrolases"/>
    <property type="match status" value="2"/>
</dbReference>
<dbReference type="PROSITE" id="PS00039">
    <property type="entry name" value="DEAD_ATP_HELICASE"/>
    <property type="match status" value="1"/>
</dbReference>
<dbReference type="PROSITE" id="PS51192">
    <property type="entry name" value="HELICASE_ATP_BIND_1"/>
    <property type="match status" value="1"/>
</dbReference>
<dbReference type="PROSITE" id="PS51194">
    <property type="entry name" value="HELICASE_CTER"/>
    <property type="match status" value="1"/>
</dbReference>
<dbReference type="PROSITE" id="PS51195">
    <property type="entry name" value="Q_MOTIF"/>
    <property type="match status" value="1"/>
</dbReference>